<name>AMYG_ASPAW</name>
<protein>
    <recommendedName>
        <fullName>Glucoamylase</fullName>
        <ecNumber>3.2.1.3</ecNumber>
    </recommendedName>
    <alternativeName>
        <fullName>1,4-alpha-D-glucan glucohydrolase</fullName>
    </alternativeName>
    <alternativeName>
        <fullName>Glucan 1,4-alpha-glucosidase</fullName>
    </alternativeName>
</protein>
<organism>
    <name type="scientific">Aspergillus awamori</name>
    <name type="common">Black koji mold</name>
    <dbReference type="NCBI Taxonomy" id="105351"/>
    <lineage>
        <taxon>Eukaryota</taxon>
        <taxon>Fungi</taxon>
        <taxon>Dikarya</taxon>
        <taxon>Ascomycota</taxon>
        <taxon>Pezizomycotina</taxon>
        <taxon>Eurotiomycetes</taxon>
        <taxon>Eurotiomycetidae</taxon>
        <taxon>Eurotiales</taxon>
        <taxon>Aspergillaceae</taxon>
        <taxon>Aspergillus</taxon>
    </lineage>
</organism>
<comment type="catalytic activity">
    <reaction>
        <text>Hydrolysis of terminal (1-&gt;4)-linked alpha-D-glucose residues successively from non-reducing ends of the chains with release of beta-D-glucose.</text>
        <dbReference type="EC" id="3.2.1.3"/>
    </reaction>
</comment>
<comment type="alternative products">
    <event type="alternative splicing"/>
    <isoform>
        <id>P69327-1</id>
        <name>G1</name>
        <sequence type="displayed"/>
    </isoform>
    <isoform>
        <id>P69327-2</id>
        <name>G2</name>
        <sequence type="described" ref="VSP_012836 VSP_000262"/>
    </isoform>
</comment>
<comment type="similarity">
    <text evidence="10">Belongs to the glycosyl hydrolase 15 family.</text>
</comment>
<keyword id="KW-0002">3D-structure</keyword>
<keyword id="KW-0025">Alternative splicing</keyword>
<keyword id="KW-0119">Carbohydrate metabolism</keyword>
<keyword id="KW-0165">Cleavage on pair of basic residues</keyword>
<keyword id="KW-1015">Disulfide bond</keyword>
<keyword id="KW-0325">Glycoprotein</keyword>
<keyword id="KW-0326">Glycosidase</keyword>
<keyword id="KW-0378">Hydrolase</keyword>
<keyword id="KW-0624">Polysaccharide degradation</keyword>
<keyword id="KW-0732">Signal</keyword>
<accession>P69327</accession>
<accession>P04064</accession>
<accession>Q92201</accession>
<accession>Q99179</accession>
<evidence type="ECO:0000250" key="1"/>
<evidence type="ECO:0000255" key="2"/>
<evidence type="ECO:0000255" key="3">
    <source>
        <dbReference type="PROSITE-ProRule" id="PRU00594"/>
    </source>
</evidence>
<evidence type="ECO:0000255" key="4">
    <source>
        <dbReference type="PROSITE-ProRule" id="PRU10051"/>
    </source>
</evidence>
<evidence type="ECO:0000256" key="5">
    <source>
        <dbReference type="SAM" id="MobiDB-lite"/>
    </source>
</evidence>
<evidence type="ECO:0000269" key="6">
    <source>
    </source>
</evidence>
<evidence type="ECO:0000269" key="7">
    <source>
    </source>
</evidence>
<evidence type="ECO:0000269" key="8">
    <source>
    </source>
</evidence>
<evidence type="ECO:0000303" key="9">
    <source>
    </source>
</evidence>
<evidence type="ECO:0000305" key="10"/>
<evidence type="ECO:0007829" key="11">
    <source>
        <dbReference type="PDB" id="1GAI"/>
    </source>
</evidence>
<feature type="signal peptide" evidence="2">
    <location>
        <begin position="1"/>
        <end position="18"/>
    </location>
</feature>
<feature type="propeptide" id="PRO_0000001459">
    <location>
        <begin position="19"/>
        <end position="24"/>
    </location>
</feature>
<feature type="chain" id="PRO_0000001460" description="Glucoamylase">
    <location>
        <begin position="25"/>
        <end position="640"/>
    </location>
</feature>
<feature type="domain" description="CBM20" evidence="3">
    <location>
        <begin position="533"/>
        <end position="640"/>
    </location>
</feature>
<feature type="region of interest" description="Disordered" evidence="5">
    <location>
        <begin position="498"/>
        <end position="533"/>
    </location>
</feature>
<feature type="region of interest" description="Disordered" evidence="5">
    <location>
        <begin position="616"/>
        <end position="640"/>
    </location>
</feature>
<feature type="compositionally biased region" description="Polar residues" evidence="5">
    <location>
        <begin position="628"/>
        <end position="640"/>
    </location>
</feature>
<feature type="active site" description="Proton acceptor" evidence="4 7">
    <location>
        <position position="200"/>
    </location>
</feature>
<feature type="active site" description="Proton donor" evidence="4 7">
    <location>
        <position position="203"/>
    </location>
</feature>
<feature type="binding site">
    <location>
        <position position="144"/>
    </location>
    <ligand>
        <name>substrate</name>
    </ligand>
</feature>
<feature type="glycosylation site" id="CAR_000112" description="N-linked (GlcNAc...) asparagine">
    <location>
        <position position="195"/>
    </location>
</feature>
<feature type="glycosylation site" id="CAR_000113" description="N-linked (GlcNAc...) asparagine">
    <location>
        <position position="419"/>
    </location>
</feature>
<feature type="glycosylation site" description="O-linked (Man) serine" evidence="1">
    <location>
        <position position="465"/>
    </location>
</feature>
<feature type="glycosylation site" description="O-linked (Man) serine">
    <location>
        <position position="467"/>
    </location>
</feature>
<feature type="glycosylation site" description="O-linked (Man) serine">
    <location>
        <position position="468"/>
    </location>
</feature>
<feature type="glycosylation site" description="O-linked (Man) threonine">
    <location>
        <position position="476"/>
    </location>
</feature>
<feature type="glycosylation site" description="O-linked (Man) serine">
    <location>
        <position position="477"/>
    </location>
</feature>
<feature type="glycosylation site" description="O-linked (Man) serine">
    <location>
        <position position="483"/>
    </location>
</feature>
<feature type="glycosylation site" description="O-linked (Man) serine">
    <location>
        <position position="484"/>
    </location>
</feature>
<feature type="glycosylation site" description="O-linked (Man) threonine">
    <location>
        <position position="486"/>
    </location>
</feature>
<feature type="glycosylation site" description="O-linked (Man) threonine">
    <location>
        <position position="488"/>
    </location>
</feature>
<feature type="glycosylation site" description="O-linked (Man) serine" evidence="1">
    <location>
        <position position="492"/>
    </location>
</feature>
<feature type="glycosylation site" description="O-linked (Man) threonine" evidence="1">
    <location>
        <position position="496"/>
    </location>
</feature>
<feature type="glycosylation site" description="O-linked (Man) threonine" evidence="1">
    <location>
        <position position="499"/>
    </location>
</feature>
<feature type="glycosylation site" description="O-linked (Man) threonine" evidence="1">
    <location>
        <position position="500"/>
    </location>
</feature>
<feature type="glycosylation site" description="O-linked (Man) threonine" evidence="1">
    <location>
        <position position="501"/>
    </location>
</feature>
<feature type="glycosylation site" description="O-linked (Man) threonine" evidence="1">
    <location>
        <position position="502"/>
    </location>
</feature>
<feature type="glycosylation site" description="O-linked (Man) threonine" evidence="1">
    <location>
        <position position="504"/>
    </location>
</feature>
<feature type="glycosylation site" description="O-linked (Man) threonine" evidence="1">
    <location>
        <position position="506"/>
    </location>
</feature>
<feature type="glycosylation site" description="O-linked (Man) serine" evidence="1">
    <location>
        <position position="508"/>
    </location>
</feature>
<feature type="glycosylation site" description="O-linked (Man) serine" evidence="1">
    <location>
        <position position="510"/>
    </location>
</feature>
<feature type="glycosylation site" description="O-linked (Man) threonine" evidence="1">
    <location>
        <position position="512"/>
    </location>
</feature>
<feature type="glycosylation site" description="O-linked (Man) serine" evidence="1">
    <location>
        <position position="513"/>
    </location>
</feature>
<feature type="glycosylation site" description="O-linked (Man) threonine" evidence="1">
    <location>
        <position position="514"/>
    </location>
</feature>
<feature type="glycosylation site" description="O-linked (Man) serine" evidence="1">
    <location>
        <position position="515"/>
    </location>
</feature>
<feature type="glycosylation site" description="O-linked (Man) threonine" evidence="1">
    <location>
        <position position="517"/>
    </location>
</feature>
<feature type="glycosylation site" description="O-linked (Man) threonine" evidence="1">
    <location>
        <position position="518"/>
    </location>
</feature>
<feature type="glycosylation site" description="O-linked (Man) threonine" evidence="1">
    <location>
        <position position="520"/>
    </location>
</feature>
<feature type="glycosylation site" description="O-linked (Man) serine" evidence="1">
    <location>
        <position position="522"/>
    </location>
</feature>
<feature type="glycosylation site" description="O-linked (Man) threonine" evidence="1">
    <location>
        <position position="524"/>
    </location>
</feature>
<feature type="glycosylation site" description="O-linked (Man) serine" evidence="1">
    <location>
        <position position="525"/>
    </location>
</feature>
<feature type="glycosylation site" description="O-linked (Man) threonine" evidence="1">
    <location>
        <position position="526"/>
    </location>
</feature>
<feature type="glycosylation site" description="O-linked (Man) serine" evidence="1">
    <location>
        <position position="527"/>
    </location>
</feature>
<feature type="glycosylation site" description="O-linked (Man) threonine" evidence="1">
    <location>
        <position position="528"/>
    </location>
</feature>
<feature type="glycosylation site" description="O-linked (Man) serine" evidence="1">
    <location>
        <position position="529"/>
    </location>
</feature>
<feature type="glycosylation site" description="O-linked (Man) serine" evidence="1">
    <location>
        <position position="530"/>
    </location>
</feature>
<feature type="glycosylation site" description="O-linked (Man) threonine" evidence="1">
    <location>
        <position position="531"/>
    </location>
</feature>
<feature type="glycosylation site" description="O-linked (Man) serine" evidence="1">
    <location>
        <position position="532"/>
    </location>
</feature>
<feature type="glycosylation site" description="O-linked (Man) threonine" evidence="1">
    <location>
        <position position="534"/>
    </location>
</feature>
<feature type="glycosylation site" description="O-linked (Man) threonine" evidence="1">
    <location>
        <position position="535"/>
    </location>
</feature>
<feature type="disulfide bond" evidence="6">
    <location>
        <begin position="234"/>
        <end position="237"/>
    </location>
</feature>
<feature type="disulfide bond" evidence="6">
    <location>
        <begin position="246"/>
        <end position="473"/>
    </location>
</feature>
<feature type="disulfide bond" evidence="6">
    <location>
        <begin position="286"/>
        <end position="294"/>
    </location>
</feature>
<feature type="splice variant" id="VSP_012836" description="In isoform G2." evidence="9">
    <original>STSSTSCT</original>
    <variation>TTRSGMSL</variation>
    <location>
        <begin position="527"/>
        <end position="534"/>
    </location>
</feature>
<feature type="splice variant" id="VSP_000262" description="In isoform G2." evidence="9">
    <location>
        <begin position="535"/>
        <end position="640"/>
    </location>
</feature>
<feature type="mutagenesis site" description="2% of wild-type activity." evidence="8">
    <original>W</original>
    <variation>Y</variation>
    <location>
        <position position="144"/>
    </location>
</feature>
<feature type="helix" evidence="11">
    <location>
        <begin position="26"/>
        <end position="44"/>
    </location>
</feature>
<feature type="turn" evidence="11">
    <location>
        <begin position="47"/>
        <end position="49"/>
    </location>
</feature>
<feature type="strand" evidence="11">
    <location>
        <begin position="67"/>
        <end position="71"/>
    </location>
</feature>
<feature type="strand" evidence="11">
    <location>
        <begin position="74"/>
        <end position="76"/>
    </location>
</feature>
<feature type="helix" evidence="11">
    <location>
        <begin position="77"/>
        <end position="92"/>
    </location>
</feature>
<feature type="helix" evidence="11">
    <location>
        <begin position="96"/>
        <end position="98"/>
    </location>
</feature>
<feature type="helix" evidence="11">
    <location>
        <begin position="99"/>
        <end position="114"/>
    </location>
</feature>
<feature type="turn" evidence="11">
    <location>
        <begin position="122"/>
        <end position="125"/>
    </location>
</feature>
<feature type="helix" evidence="11">
    <location>
        <begin position="127"/>
        <end position="129"/>
    </location>
</feature>
<feature type="helix" evidence="11">
    <location>
        <begin position="150"/>
        <end position="168"/>
    </location>
</feature>
<feature type="helix" evidence="11">
    <location>
        <begin position="172"/>
        <end position="177"/>
    </location>
</feature>
<feature type="helix" evidence="11">
    <location>
        <begin position="179"/>
        <end position="193"/>
    </location>
</feature>
<feature type="strand" evidence="11">
    <location>
        <begin position="206"/>
        <end position="209"/>
    </location>
</feature>
<feature type="helix" evidence="11">
    <location>
        <begin position="210"/>
        <end position="229"/>
    </location>
</feature>
<feature type="helix" evidence="11">
    <location>
        <begin position="235"/>
        <end position="248"/>
    </location>
</feature>
<feature type="helix" evidence="11">
    <location>
        <begin position="249"/>
        <end position="251"/>
    </location>
</feature>
<feature type="strand" evidence="11">
    <location>
        <begin position="254"/>
        <end position="257"/>
    </location>
</feature>
<feature type="strand" evidence="11">
    <location>
        <begin position="259"/>
        <end position="262"/>
    </location>
</feature>
<feature type="helix" evidence="11">
    <location>
        <begin position="271"/>
        <end position="277"/>
    </location>
</feature>
<feature type="turn" evidence="11">
    <location>
        <begin position="288"/>
        <end position="291"/>
    </location>
</feature>
<feature type="helix" evidence="11">
    <location>
        <begin position="296"/>
        <end position="307"/>
    </location>
</feature>
<feature type="turn" evidence="11">
    <location>
        <begin position="308"/>
        <end position="312"/>
    </location>
</feature>
<feature type="helix" evidence="11">
    <location>
        <begin position="314"/>
        <end position="316"/>
    </location>
</feature>
<feature type="helix" evidence="11">
    <location>
        <begin position="335"/>
        <end position="337"/>
    </location>
</feature>
<feature type="helix" evidence="11">
    <location>
        <begin position="342"/>
        <end position="362"/>
    </location>
</feature>
<feature type="strand" evidence="11">
    <location>
        <begin position="364"/>
        <end position="367"/>
    </location>
</feature>
<feature type="turn" evidence="11">
    <location>
        <begin position="369"/>
        <end position="371"/>
    </location>
</feature>
<feature type="helix" evidence="11">
    <location>
        <begin position="372"/>
        <end position="378"/>
    </location>
</feature>
<feature type="strand" evidence="11">
    <location>
        <begin position="384"/>
        <end position="388"/>
    </location>
</feature>
<feature type="helix" evidence="11">
    <location>
        <begin position="392"/>
        <end position="415"/>
    </location>
</feature>
<feature type="strand" evidence="11">
    <location>
        <begin position="424"/>
        <end position="426"/>
    </location>
</feature>
<feature type="turn" evidence="11">
    <location>
        <begin position="428"/>
        <end position="430"/>
    </location>
</feature>
<feature type="strand" evidence="11">
    <location>
        <begin position="433"/>
        <end position="438"/>
    </location>
</feature>
<feature type="helix" evidence="11">
    <location>
        <begin position="440"/>
        <end position="453"/>
    </location>
</feature>
<feature type="helix" evidence="11">
    <location>
        <begin position="463"/>
        <end position="465"/>
    </location>
</feature>
<sequence length="640" mass="68309">MSFRSLLALSGLVCTGLANVISKRATLDSWLSNEATVARTAILNNIGADGAWVSGADSGIVVASPSTDNPDYFYTWTRDSGLVLKTLVDLFRNGDTSLLSTIENYISAQAIVQGISNPSGDLSSGAGLGEPKFNVDETAYTGSWGRPQRDGPALRATAMIGFGQWLLDNGYTSTATDIVWPLVRNDLSYVAQYWNQTGYDLWEEVNGSSFFTIAVQHRALVEGSAFATAVGSSCSWCDSQAPEILCYLQSFWTGSFILANFDSSRSGKDANTLLGSIHTFDPEAACDDSTFQPCSPRALANHKEVVDSFRSIYTLNDGLSDSEAVAVGRYPEDTYYNGNPWFLCTLAAAEQLYDALYQWDKQGSLEVTDVSLDFFKALYSDAATGTYSSSSSTYSSIVDAVKTFADGFVSIVETHAASNGSMSEQYDKSDGEQLSARDLTWSYAALLTANNRRNSVVPASWGETSASSVPGTCAATSAIGTYSSVTVTSWPSIVATGGTTTTATPTGSGSVTSTSKTTATASKTSTSTSSTSCTTPTAVAVTFDLTATTTYGENIYLVGSISQLGDWETSDGIALSADKYTSSDPLWYVTVTLPAGESFEYKFIRIESDDSVEWESDPNREYTVPQACGTSTATVTDTWR</sequence>
<reference key="1">
    <citation type="journal article" date="1984" name="Mol. Cell. Biol.">
        <title>Molecular cloning and characterization of the glucoamylase gene of Aspergillus awamori.</title>
        <authorList>
            <person name="Nunberg J.H."/>
            <person name="Meade J.H."/>
            <person name="Cole G."/>
            <person name="Lawyer F.C."/>
            <person name="McCabe P."/>
            <person name="Schweickart V."/>
            <person name="Tal R."/>
            <person name="Wittman V.P."/>
            <person name="Flatgaard J.E."/>
            <person name="Innis M.A."/>
        </authorList>
    </citation>
    <scope>NUCLEOTIDE SEQUENCE [MRNA] (ISOFORMS G1 AND G2)</scope>
</reference>
<reference key="2">
    <citation type="submission" date="1985-02" db="EMBL/GenBank/DDBJ databases">
        <authorList>
            <person name="Nunberg J.H."/>
            <person name="Meade J.H."/>
            <person name="Cole G."/>
            <person name="Lawyer F.C."/>
            <person name="McCabe P."/>
            <person name="Schweickart V."/>
            <person name="Tal R."/>
            <person name="Wittman V.P."/>
            <person name="Flatgaard J.E."/>
            <person name="Innis M.A."/>
        </authorList>
    </citation>
    <scope>SEQUENCE REVISION</scope>
</reference>
<reference key="3">
    <citation type="journal article" date="1990" name="Protein Eng.">
        <title>Catalytic mechanism of fungal glucoamylase as defined by mutagenesis of Asp176, Glu179 and Glu180 in the enzyme from Aspergillus awamori.</title>
        <authorList>
            <person name="Sierks M.R."/>
            <person name="Ford C."/>
            <person name="Reilly P.J."/>
            <person name="Svensson B."/>
        </authorList>
    </citation>
    <scope>ACTIVE SITES</scope>
    <scope>MUTAGENESIS</scope>
</reference>
<reference key="4">
    <citation type="journal article" date="1989" name="Protein Eng.">
        <title>Site-directed mutagenesis at the active site Trp120 of Aspergillus awamori glucoamylase.</title>
        <authorList>
            <person name="Sierks M.R."/>
            <person name="Ford C."/>
            <person name="Reilly P.J."/>
            <person name="Svensson B."/>
        </authorList>
    </citation>
    <scope>MUTAGENESIS OF TRP-144</scope>
</reference>
<reference key="5">
    <citation type="journal article" date="1993" name="Protein Eng.">
        <title>Functional roles and subsite locations of Leu177, Trp178 and Asn182 of Aspergillus awamori glucoamylase determined by site-directed mutagenesis.</title>
        <authorList>
            <person name="Sierks M.R."/>
            <person name="Ford C."/>
            <person name="Reilly P.J."/>
            <person name="Svensson B."/>
        </authorList>
    </citation>
    <scope>MUTAGENESIS</scope>
</reference>
<reference key="6">
    <citation type="journal article" date="1992" name="J. Biol. Chem.">
        <title>Crystal structure of glucoamylase from Aspergillus awamori var. X100 to 2.2-A resolution.</title>
        <authorList>
            <person name="Aleshin A."/>
            <person name="Golubev A."/>
            <person name="Firsov L.M."/>
            <person name="Honzatko R.B."/>
        </authorList>
    </citation>
    <scope>X-RAY CRYSTALLOGRAPHY (2.2 ANGSTROMS) OF 25-495</scope>
    <scope>GLYCOSYLATION</scope>
    <scope>DISULFIDE BONDS</scope>
    <source>
        <strain>Var. X100</strain>
    </source>
</reference>
<reference key="7">
    <citation type="journal article" date="1994" name="J. Biol. Chem.">
        <title>Refined structure for the complex of acarbose with glucoamylase from Aspergillus awamori var. X100 to 2.4-A resolution.</title>
        <authorList>
            <person name="Aleshin A."/>
            <person name="Firsov L.M."/>
            <person name="Honzatko R.B."/>
        </authorList>
    </citation>
    <scope>X-RAY CRYSTALLOGRAPHY (2.4 ANGSTROMS) OF 25-495</scope>
    <source>
        <strain>Var. X100</strain>
    </source>
</reference>
<reference key="8">
    <citation type="journal article" date="1994" name="J. Mol. Biol.">
        <title>Refined crystal structures of glucoamylase from Aspergillus awamori var. X100.</title>
        <authorList>
            <person name="Aleshin A."/>
            <person name="Hoffman C."/>
            <person name="Firsov L.M."/>
            <person name="Honzatko R.B."/>
        </authorList>
    </citation>
    <scope>X-RAY CRYSTALLOGRAPHY (2.2 ANGSTROMS) OF 25-495</scope>
    <scope>GLYCOSYLATION</scope>
    <source>
        <strain>Var. X100</strain>
    </source>
</reference>
<dbReference type="EC" id="3.2.1.3"/>
<dbReference type="EMBL" id="K02465">
    <property type="protein sequence ID" value="AAB59296.1"/>
    <property type="molecule type" value="mRNA"/>
</dbReference>
<dbReference type="EMBL" id="K02465">
    <property type="protein sequence ID" value="AAB59297.1"/>
    <property type="molecule type" value="mRNA"/>
</dbReference>
<dbReference type="PIR" id="A29166">
    <property type="entry name" value="A29166"/>
</dbReference>
<dbReference type="PIR" id="A93066">
    <property type="entry name" value="A29776"/>
</dbReference>
<dbReference type="PDB" id="1AGM">
    <property type="method" value="X-ray"/>
    <property type="resolution" value="2.30 A"/>
    <property type="chains" value="A=25-495"/>
</dbReference>
<dbReference type="PDB" id="1DOG">
    <property type="method" value="X-ray"/>
    <property type="resolution" value="2.30 A"/>
    <property type="chains" value="A=25-495"/>
</dbReference>
<dbReference type="PDB" id="1GAH">
    <property type="method" value="X-ray"/>
    <property type="resolution" value="2.00 A"/>
    <property type="chains" value="A=25-496"/>
</dbReference>
<dbReference type="PDB" id="1GAI">
    <property type="method" value="X-ray"/>
    <property type="resolution" value="1.70 A"/>
    <property type="chains" value="A=25-497"/>
</dbReference>
<dbReference type="PDB" id="1GLM">
    <property type="method" value="X-ray"/>
    <property type="resolution" value="2.40 A"/>
    <property type="chains" value="A=25-495"/>
</dbReference>
<dbReference type="PDB" id="3GLY">
    <property type="method" value="X-ray"/>
    <property type="resolution" value="2.20 A"/>
    <property type="chains" value="A=25-495"/>
</dbReference>
<dbReference type="PDBsum" id="1AGM"/>
<dbReference type="PDBsum" id="1DOG"/>
<dbReference type="PDBsum" id="1GAH"/>
<dbReference type="PDBsum" id="1GAI"/>
<dbReference type="PDBsum" id="1GLM"/>
<dbReference type="PDBsum" id="3GLY"/>
<dbReference type="BMRB" id="P69327"/>
<dbReference type="SMR" id="P69327"/>
<dbReference type="CAZy" id="CBM20">
    <property type="family name" value="Carbohydrate-Binding Module Family 20"/>
</dbReference>
<dbReference type="CAZy" id="GH15">
    <property type="family name" value="Glycoside Hydrolase Family 15"/>
</dbReference>
<dbReference type="GlyConnect" id="174">
    <property type="glycosylation" value="2 N-Linked glycans (2 sites)"/>
</dbReference>
<dbReference type="GlyCosmos" id="P69327">
    <property type="glycosylation" value="40 sites, 5 glycans"/>
</dbReference>
<dbReference type="BRENDA" id="3.2.1.3">
    <property type="organism ID" value="494"/>
</dbReference>
<dbReference type="EvolutionaryTrace" id="P69327"/>
<dbReference type="GO" id="GO:0000324">
    <property type="term" value="C:fungal-type vacuole"/>
    <property type="evidence" value="ECO:0007669"/>
    <property type="project" value="TreeGrafter"/>
</dbReference>
<dbReference type="GO" id="GO:0004339">
    <property type="term" value="F:glucan 1,4-alpha-glucosidase activity"/>
    <property type="evidence" value="ECO:0007669"/>
    <property type="project" value="UniProtKB-EC"/>
</dbReference>
<dbReference type="GO" id="GO:2001070">
    <property type="term" value="F:starch binding"/>
    <property type="evidence" value="ECO:0007669"/>
    <property type="project" value="InterPro"/>
</dbReference>
<dbReference type="GO" id="GO:0000272">
    <property type="term" value="P:polysaccharide catabolic process"/>
    <property type="evidence" value="ECO:0007669"/>
    <property type="project" value="UniProtKB-KW"/>
</dbReference>
<dbReference type="CDD" id="cd05811">
    <property type="entry name" value="CBM20_glucoamylase"/>
    <property type="match status" value="1"/>
</dbReference>
<dbReference type="FunFam" id="1.50.10.10:FF:000018">
    <property type="entry name" value="Glucoamylase"/>
    <property type="match status" value="1"/>
</dbReference>
<dbReference type="FunFam" id="2.60.40.10:FF:000552">
    <property type="entry name" value="Related to glucoamylase"/>
    <property type="match status" value="1"/>
</dbReference>
<dbReference type="Gene3D" id="1.50.10.10">
    <property type="match status" value="1"/>
</dbReference>
<dbReference type="Gene3D" id="2.60.40.10">
    <property type="entry name" value="Immunoglobulins"/>
    <property type="match status" value="1"/>
</dbReference>
<dbReference type="InterPro" id="IPR008928">
    <property type="entry name" value="6-hairpin_glycosidase_sf"/>
</dbReference>
<dbReference type="InterPro" id="IPR012341">
    <property type="entry name" value="6hp_glycosidase-like_sf"/>
</dbReference>
<dbReference type="InterPro" id="IPR013784">
    <property type="entry name" value="Carb-bd-like_fold"/>
</dbReference>
<dbReference type="InterPro" id="IPR002044">
    <property type="entry name" value="CBM20"/>
</dbReference>
<dbReference type="InterPro" id="IPR034836">
    <property type="entry name" value="CBM20_glucoamylase"/>
</dbReference>
<dbReference type="InterPro" id="IPR011613">
    <property type="entry name" value="GH15-like"/>
</dbReference>
<dbReference type="InterPro" id="IPR000165">
    <property type="entry name" value="Glucoamylase"/>
</dbReference>
<dbReference type="InterPro" id="IPR046966">
    <property type="entry name" value="Glucoamylase_active_site"/>
</dbReference>
<dbReference type="InterPro" id="IPR008291">
    <property type="entry name" value="Glucoamylase_SBD"/>
</dbReference>
<dbReference type="InterPro" id="IPR013783">
    <property type="entry name" value="Ig-like_fold"/>
</dbReference>
<dbReference type="PANTHER" id="PTHR31616:SF12">
    <property type="entry name" value="GLUCOAMYLASE"/>
    <property type="match status" value="1"/>
</dbReference>
<dbReference type="PANTHER" id="PTHR31616">
    <property type="entry name" value="TREHALASE"/>
    <property type="match status" value="1"/>
</dbReference>
<dbReference type="Pfam" id="PF00686">
    <property type="entry name" value="CBM_20"/>
    <property type="match status" value="1"/>
</dbReference>
<dbReference type="Pfam" id="PF00723">
    <property type="entry name" value="Glyco_hydro_15"/>
    <property type="match status" value="1"/>
</dbReference>
<dbReference type="PIRSF" id="PIRSF001031">
    <property type="entry name" value="Glu-a-glcsd_SBD"/>
    <property type="match status" value="1"/>
</dbReference>
<dbReference type="PRINTS" id="PR00736">
    <property type="entry name" value="GLHYDRLASE15"/>
</dbReference>
<dbReference type="SMART" id="SM01065">
    <property type="entry name" value="CBM_2"/>
    <property type="match status" value="1"/>
</dbReference>
<dbReference type="SUPFAM" id="SSF48208">
    <property type="entry name" value="Six-hairpin glycosidases"/>
    <property type="match status" value="1"/>
</dbReference>
<dbReference type="SUPFAM" id="SSF49452">
    <property type="entry name" value="Starch-binding domain-like"/>
    <property type="match status" value="1"/>
</dbReference>
<dbReference type="PROSITE" id="PS51166">
    <property type="entry name" value="CBM20"/>
    <property type="match status" value="1"/>
</dbReference>
<dbReference type="PROSITE" id="PS00820">
    <property type="entry name" value="GLUCOAMYLASE"/>
    <property type="match status" value="1"/>
</dbReference>
<proteinExistence type="evidence at protein level"/>
<gene>
    <name type="primary">GLAA</name>
</gene>